<sequence>MSNIGIDVKAPENVCEDVNCPFHGTLSVRGQIFEGVVSGDKGHNTIVIKREVTGYISKYERYEKRTTSLVAHNPPCINAKTGDVVKVMECRPVSKTKSFVVIEKTENLE</sequence>
<protein>
    <recommendedName>
        <fullName evidence="1">Small ribosomal subunit protein uS17</fullName>
    </recommendedName>
    <alternativeName>
        <fullName evidence="2">30S ribosomal protein S17</fullName>
    </alternativeName>
</protein>
<dbReference type="EMBL" id="X16720">
    <property type="protein sequence ID" value="CAA34689.1"/>
    <property type="molecule type" value="Genomic_DNA"/>
</dbReference>
<dbReference type="PIR" id="S05613">
    <property type="entry name" value="R3MX17"/>
</dbReference>
<dbReference type="SMR" id="P14042"/>
<dbReference type="OMA" id="DPECPWH"/>
<dbReference type="GO" id="GO:0022627">
    <property type="term" value="C:cytosolic small ribosomal subunit"/>
    <property type="evidence" value="ECO:0007669"/>
    <property type="project" value="TreeGrafter"/>
</dbReference>
<dbReference type="GO" id="GO:0019843">
    <property type="term" value="F:rRNA binding"/>
    <property type="evidence" value="ECO:0007669"/>
    <property type="project" value="UniProtKB-UniRule"/>
</dbReference>
<dbReference type="GO" id="GO:0003735">
    <property type="term" value="F:structural constituent of ribosome"/>
    <property type="evidence" value="ECO:0007669"/>
    <property type="project" value="InterPro"/>
</dbReference>
<dbReference type="GO" id="GO:0006412">
    <property type="term" value="P:translation"/>
    <property type="evidence" value="ECO:0007669"/>
    <property type="project" value="UniProtKB-UniRule"/>
</dbReference>
<dbReference type="CDD" id="cd00364">
    <property type="entry name" value="Ribosomal_uS17"/>
    <property type="match status" value="1"/>
</dbReference>
<dbReference type="FunFam" id="2.40.50.1000:FF:000005">
    <property type="entry name" value="30S ribosomal protein S17"/>
    <property type="match status" value="1"/>
</dbReference>
<dbReference type="Gene3D" id="2.40.50.1000">
    <property type="match status" value="1"/>
</dbReference>
<dbReference type="HAMAP" id="MF_01345_A">
    <property type="entry name" value="Ribosomal_uS17_A"/>
    <property type="match status" value="1"/>
</dbReference>
<dbReference type="InterPro" id="IPR012340">
    <property type="entry name" value="NA-bd_OB-fold"/>
</dbReference>
<dbReference type="InterPro" id="IPR000266">
    <property type="entry name" value="Ribosomal_uS17"/>
</dbReference>
<dbReference type="InterPro" id="IPR028333">
    <property type="entry name" value="Ribosomal_uS17_arc/euk"/>
</dbReference>
<dbReference type="InterPro" id="IPR019978">
    <property type="entry name" value="Ribosomal_uS17_archaeal"/>
</dbReference>
<dbReference type="InterPro" id="IPR019979">
    <property type="entry name" value="Ribosomal_uS17_CS"/>
</dbReference>
<dbReference type="NCBIfam" id="NF006345">
    <property type="entry name" value="PRK08572.1"/>
    <property type="match status" value="1"/>
</dbReference>
<dbReference type="NCBIfam" id="TIGR03630">
    <property type="entry name" value="uS17_arch"/>
    <property type="match status" value="1"/>
</dbReference>
<dbReference type="PANTHER" id="PTHR10744">
    <property type="entry name" value="40S RIBOSOMAL PROTEIN S11 FAMILY MEMBER"/>
    <property type="match status" value="1"/>
</dbReference>
<dbReference type="PANTHER" id="PTHR10744:SF9">
    <property type="entry name" value="40S RIBOSOMAL PROTEIN S11-RELATED"/>
    <property type="match status" value="1"/>
</dbReference>
<dbReference type="Pfam" id="PF00366">
    <property type="entry name" value="Ribosomal_S17"/>
    <property type="match status" value="1"/>
</dbReference>
<dbReference type="PRINTS" id="PR00973">
    <property type="entry name" value="RIBOSOMALS17"/>
</dbReference>
<dbReference type="SUPFAM" id="SSF50249">
    <property type="entry name" value="Nucleic acid-binding proteins"/>
    <property type="match status" value="1"/>
</dbReference>
<dbReference type="PROSITE" id="PS00056">
    <property type="entry name" value="RIBOSOMAL_S17"/>
    <property type="match status" value="1"/>
</dbReference>
<comment type="function">
    <text evidence="1">One of the primary rRNA binding proteins, it binds specifically to the 5'-end of 16S ribosomal RNA.</text>
</comment>
<comment type="subunit">
    <text evidence="1">Part of the 30S ribosomal subunit.</text>
</comment>
<comment type="similarity">
    <text evidence="1">Belongs to the universal ribosomal protein uS17 family.</text>
</comment>
<proteinExistence type="inferred from homology"/>
<keyword id="KW-0687">Ribonucleoprotein</keyword>
<keyword id="KW-0689">Ribosomal protein</keyword>
<keyword id="KW-0694">RNA-binding</keyword>
<keyword id="KW-0699">rRNA-binding</keyword>
<accession>P14042</accession>
<feature type="chain" id="PRO_0000128500" description="Small ribosomal subunit protein uS17">
    <location>
        <begin position="1"/>
        <end position="109"/>
    </location>
</feature>
<evidence type="ECO:0000255" key="1">
    <source>
        <dbReference type="HAMAP-Rule" id="MF_01345"/>
    </source>
</evidence>
<evidence type="ECO:0000305" key="2"/>
<gene>
    <name evidence="1" type="primary">rps17</name>
</gene>
<organism>
    <name type="scientific">Methanococcus vannielii</name>
    <dbReference type="NCBI Taxonomy" id="2187"/>
    <lineage>
        <taxon>Archaea</taxon>
        <taxon>Methanobacteriati</taxon>
        <taxon>Methanobacteriota</taxon>
        <taxon>Methanomada group</taxon>
        <taxon>Methanococci</taxon>
        <taxon>Methanococcales</taxon>
        <taxon>Methanococcaceae</taxon>
        <taxon>Methanococcus</taxon>
    </lineage>
</organism>
<reference key="1">
    <citation type="journal article" date="1989" name="J. Mol. Biol.">
        <title>Organization and structure of the Methanococcus transcriptional unit homologous to the Escherichia coli 'spectinomycin operon'. Implications for the evolutionary relationship of 70 S and 80 S ribosomes.</title>
        <authorList>
            <person name="Auer J."/>
            <person name="Spicker G."/>
            <person name="Boeck A."/>
        </authorList>
    </citation>
    <scope>NUCLEOTIDE SEQUENCE [GENOMIC DNA]</scope>
</reference>
<name>RS17_METVA</name>